<name>YCX1_ANTAG</name>
<proteinExistence type="evidence at transcript level"/>
<accession>Q85BV1</accession>
<accession>Q85UU5</accession>
<keyword id="KW-0150">Chloroplast</keyword>
<keyword id="KW-0472">Membrane</keyword>
<keyword id="KW-0934">Plastid</keyword>
<keyword id="KW-0691">RNA editing</keyword>
<keyword id="KW-0812">Transmembrane</keyword>
<keyword id="KW-1133">Transmembrane helix</keyword>
<feature type="chain" id="PRO_0000217423" description="Uncharacterized 5.9 kDa protein in rps16-psbA intergenic region">
    <location>
        <begin position="1"/>
        <end position="51"/>
    </location>
</feature>
<feature type="transmembrane region" description="Helical" evidence="1">
    <location>
        <begin position="10"/>
        <end position="29"/>
    </location>
</feature>
<reference key="1">
    <citation type="journal article" date="2003" name="Nucleic Acids Res.">
        <title>The complete nucleotide sequence of the hornwort (Anthoceros formosae) chloroplast genome: insight into the earliest land plants.</title>
        <authorList>
            <person name="Kugita M."/>
            <person name="Kaneko A."/>
            <person name="Yamamoto Y."/>
            <person name="Takeya Y."/>
            <person name="Matsumoto T."/>
            <person name="Yoshinaga K."/>
        </authorList>
    </citation>
    <scope>NUCLEOTIDE SEQUENCE [LARGE SCALE GENOMIC DNA]</scope>
    <scope>RNA EDITING</scope>
</reference>
<reference key="2">
    <citation type="journal article" date="2003" name="Nucleic Acids Res.">
        <title>RNA editing in hornwort chloroplasts makes more than half the genes functional.</title>
        <authorList>
            <person name="Kugita M."/>
            <person name="Yamamoto Y."/>
            <person name="Fujikawa T."/>
            <person name="Matsumoto T."/>
            <person name="Yoshinaga K."/>
        </authorList>
    </citation>
    <scope>NUCLEOTIDE SEQUENCE [MRNA]</scope>
    <scope>RNA EDITING</scope>
    <source>
        <tissue>Thallus</tissue>
    </source>
</reference>
<evidence type="ECO:0000255" key="1"/>
<evidence type="ECO:0000269" key="2">
    <source>
    </source>
</evidence>
<evidence type="ECO:0000269" key="3">
    <source>
    </source>
</evidence>
<evidence type="ECO:0000305" key="4"/>
<organism>
    <name type="scientific">Anthoceros angustus</name>
    <name type="common">Hornwort</name>
    <name type="synonym">Anthoceros formosae</name>
    <dbReference type="NCBI Taxonomy" id="48387"/>
    <lineage>
        <taxon>Eukaryota</taxon>
        <taxon>Viridiplantae</taxon>
        <taxon>Streptophyta</taxon>
        <taxon>Embryophyta</taxon>
        <taxon>Anthocerotophyta</taxon>
        <taxon>Anthocerotopsida</taxon>
        <taxon>Anthocerotidae</taxon>
        <taxon>Anthocerotales</taxon>
        <taxon>Anthocerotaceae</taxon>
        <taxon>Anthoceros</taxon>
    </lineage>
</organism>
<dbReference type="EMBL" id="AB086179">
    <property type="protein sequence ID" value="BAC55340.1"/>
    <property type="molecule type" value="Genomic_DNA"/>
</dbReference>
<dbReference type="EMBL" id="AB087432">
    <property type="protein sequence ID" value="BAC55433.1"/>
    <property type="molecule type" value="mRNA"/>
</dbReference>
<dbReference type="EMBL" id="AB087431">
    <property type="protein sequence ID" value="BAC55431.1"/>
    <property type="molecule type" value="mRNA"/>
</dbReference>
<dbReference type="RefSeq" id="NP_777404.1">
    <property type="nucleotide sequence ID" value="NC_004543.1"/>
</dbReference>
<dbReference type="SMR" id="Q85BV1"/>
<dbReference type="GeneID" id="2553509"/>
<dbReference type="GO" id="GO:0031969">
    <property type="term" value="C:chloroplast membrane"/>
    <property type="evidence" value="ECO:0007669"/>
    <property type="project" value="UniProtKB-SubCell"/>
</dbReference>
<geneLocation type="chloroplast"/>
<sequence>MNLIFGFVQLFLYHPLFLLLLYIYLVLFIPLKGAINITNIFPTLLKSIGIK</sequence>
<protein>
    <recommendedName>
        <fullName>Uncharacterized 5.9 kDa protein in rps16-psbA intergenic region</fullName>
    </recommendedName>
    <alternativeName>
        <fullName>ORF51</fullName>
    </alternativeName>
</protein>
<comment type="subcellular location">
    <subcellularLocation>
        <location evidence="4">Plastid</location>
        <location evidence="4">Chloroplast membrane</location>
        <topology evidence="4">Single-pass membrane protein</topology>
    </subcellularLocation>
</comment>
<comment type="RNA editing">
    <location>
        <position position="8" evidence="2 3"/>
    </location>
    <location>
        <position position="23" evidence="2 3"/>
    </location>
</comment>